<protein>
    <recommendedName>
        <fullName evidence="1">Glycerol kinase</fullName>
        <ecNumber evidence="1">2.7.1.30</ecNumber>
    </recommendedName>
    <alternativeName>
        <fullName evidence="1">ATP:glycerol 3-phosphotransferase</fullName>
    </alternativeName>
    <alternativeName>
        <fullName evidence="1">Glycerokinase</fullName>
        <shortName evidence="1">GK</shortName>
    </alternativeName>
</protein>
<sequence length="500" mass="55447">MKEKYILSIDEGTTSTRAIIFDHNGNEIVSAQKEITQYFPEPGWVEHDANEIWMAVQTTIANAFIQSGIWPGQIAAIGITNQRETAVVWDKDTGKPIYHAIVWQSRQTTDLAEKLKKDGYSNLIREKTGLIVDPYFSATKIRWILDHVPGAQEKAEQGKLLFGTIDSWLVWKLTDGQKHVTDYTNASRTMLFNIHTLKWDKEILNLLNIPEKMLPEVRSNSEVYGTTASYMFFGGEVSIAGMAGDQQAALFGQLALKPGMVKNTYGTGAFIVMNTGDKPTTSNNNLLTTIGYGINGKITYALEGSIFVAGSAIQWLRDSMKLIKNAPDSEKAAYESTSENEVYVVPAFTGLGAPYWDAEARGAIFGVTRGTTDKDMIKATLQSLAYQTRDVVDTMQKDSGIDIPALRVDGGASNNNYLMQFQADILGKKIERTKVLETTSMGAAFLAGLAVGYWKNIDELKHVFTIGQAFEPKMGDLERKKLYDGWQRAIKATRVFAHGE</sequence>
<organism>
    <name type="scientific">Lactobacillus acidophilus (strain ATCC 700396 / NCK56 / N2 / NCFM)</name>
    <dbReference type="NCBI Taxonomy" id="272621"/>
    <lineage>
        <taxon>Bacteria</taxon>
        <taxon>Bacillati</taxon>
        <taxon>Bacillota</taxon>
        <taxon>Bacilli</taxon>
        <taxon>Lactobacillales</taxon>
        <taxon>Lactobacillaceae</taxon>
        <taxon>Lactobacillus</taxon>
    </lineage>
</organism>
<proteinExistence type="inferred from homology"/>
<keyword id="KW-0067">ATP-binding</keyword>
<keyword id="KW-0319">Glycerol metabolism</keyword>
<keyword id="KW-0418">Kinase</keyword>
<keyword id="KW-0547">Nucleotide-binding</keyword>
<keyword id="KW-1185">Reference proteome</keyword>
<keyword id="KW-0808">Transferase</keyword>
<accession>Q5FHZ6</accession>
<comment type="function">
    <text evidence="1">Key enzyme in the regulation of glycerol uptake and metabolism. Catalyzes the phosphorylation of glycerol to yield sn-glycerol 3-phosphate.</text>
</comment>
<comment type="catalytic activity">
    <reaction evidence="1">
        <text>glycerol + ATP = sn-glycerol 3-phosphate + ADP + H(+)</text>
        <dbReference type="Rhea" id="RHEA:21644"/>
        <dbReference type="ChEBI" id="CHEBI:15378"/>
        <dbReference type="ChEBI" id="CHEBI:17754"/>
        <dbReference type="ChEBI" id="CHEBI:30616"/>
        <dbReference type="ChEBI" id="CHEBI:57597"/>
        <dbReference type="ChEBI" id="CHEBI:456216"/>
        <dbReference type="EC" id="2.7.1.30"/>
    </reaction>
</comment>
<comment type="activity regulation">
    <text evidence="1">Activated by phosphorylation and inhibited by fructose 1,6-bisphosphate (FBP).</text>
</comment>
<comment type="pathway">
    <text evidence="1">Polyol metabolism; glycerol degradation via glycerol kinase pathway; sn-glycerol 3-phosphate from glycerol: step 1/1.</text>
</comment>
<comment type="subunit">
    <text evidence="1">Homotetramer and homodimer (in equilibrium).</text>
</comment>
<comment type="similarity">
    <text evidence="1">Belongs to the FGGY kinase family.</text>
</comment>
<gene>
    <name evidence="1" type="primary">glpK</name>
    <name type="ordered locus">LBA1878</name>
</gene>
<reference key="1">
    <citation type="journal article" date="2005" name="Proc. Natl. Acad. Sci. U.S.A.">
        <title>Complete genome sequence of the probiotic lactic acid bacterium Lactobacillus acidophilus NCFM.</title>
        <authorList>
            <person name="Altermann E."/>
            <person name="Russell W.M."/>
            <person name="Azcarate-Peril M.A."/>
            <person name="Barrangou R."/>
            <person name="Buck B.L."/>
            <person name="McAuliffe O."/>
            <person name="Souther N."/>
            <person name="Dobson A."/>
            <person name="Duong T."/>
            <person name="Callanan M."/>
            <person name="Lick S."/>
            <person name="Hamrick A."/>
            <person name="Cano R."/>
            <person name="Klaenhammer T.R."/>
        </authorList>
    </citation>
    <scope>NUCLEOTIDE SEQUENCE [LARGE SCALE GENOMIC DNA]</scope>
    <source>
        <strain>ATCC 700396 / NCK56 / N2 / NCFM</strain>
    </source>
</reference>
<name>GLPK_LACAC</name>
<feature type="chain" id="PRO_1000020739" description="Glycerol kinase">
    <location>
        <begin position="1"/>
        <end position="500"/>
    </location>
</feature>
<feature type="binding site" evidence="1">
    <location>
        <position position="13"/>
    </location>
    <ligand>
        <name>ADP</name>
        <dbReference type="ChEBI" id="CHEBI:456216"/>
    </ligand>
</feature>
<feature type="binding site" evidence="1">
    <location>
        <position position="13"/>
    </location>
    <ligand>
        <name>ATP</name>
        <dbReference type="ChEBI" id="CHEBI:30616"/>
    </ligand>
</feature>
<feature type="binding site" evidence="1">
    <location>
        <position position="13"/>
    </location>
    <ligand>
        <name>sn-glycerol 3-phosphate</name>
        <dbReference type="ChEBI" id="CHEBI:57597"/>
    </ligand>
</feature>
<feature type="binding site" evidence="1">
    <location>
        <position position="14"/>
    </location>
    <ligand>
        <name>ATP</name>
        <dbReference type="ChEBI" id="CHEBI:30616"/>
    </ligand>
</feature>
<feature type="binding site" evidence="1">
    <location>
        <position position="15"/>
    </location>
    <ligand>
        <name>ATP</name>
        <dbReference type="ChEBI" id="CHEBI:30616"/>
    </ligand>
</feature>
<feature type="binding site" evidence="1">
    <location>
        <position position="17"/>
    </location>
    <ligand>
        <name>ADP</name>
        <dbReference type="ChEBI" id="CHEBI:456216"/>
    </ligand>
</feature>
<feature type="binding site" evidence="1">
    <location>
        <position position="83"/>
    </location>
    <ligand>
        <name>glycerol</name>
        <dbReference type="ChEBI" id="CHEBI:17754"/>
    </ligand>
</feature>
<feature type="binding site" evidence="1">
    <location>
        <position position="83"/>
    </location>
    <ligand>
        <name>sn-glycerol 3-phosphate</name>
        <dbReference type="ChEBI" id="CHEBI:57597"/>
    </ligand>
</feature>
<feature type="binding site" evidence="1">
    <location>
        <position position="84"/>
    </location>
    <ligand>
        <name>glycerol</name>
        <dbReference type="ChEBI" id="CHEBI:17754"/>
    </ligand>
</feature>
<feature type="binding site" evidence="1">
    <location>
        <position position="84"/>
    </location>
    <ligand>
        <name>sn-glycerol 3-phosphate</name>
        <dbReference type="ChEBI" id="CHEBI:57597"/>
    </ligand>
</feature>
<feature type="binding site" evidence="1">
    <location>
        <position position="135"/>
    </location>
    <ligand>
        <name>glycerol</name>
        <dbReference type="ChEBI" id="CHEBI:17754"/>
    </ligand>
</feature>
<feature type="binding site" evidence="1">
    <location>
        <position position="135"/>
    </location>
    <ligand>
        <name>sn-glycerol 3-phosphate</name>
        <dbReference type="ChEBI" id="CHEBI:57597"/>
    </ligand>
</feature>
<feature type="binding site" evidence="1">
    <location>
        <position position="245"/>
    </location>
    <ligand>
        <name>glycerol</name>
        <dbReference type="ChEBI" id="CHEBI:17754"/>
    </ligand>
</feature>
<feature type="binding site" evidence="1">
    <location>
        <position position="245"/>
    </location>
    <ligand>
        <name>sn-glycerol 3-phosphate</name>
        <dbReference type="ChEBI" id="CHEBI:57597"/>
    </ligand>
</feature>
<feature type="binding site" evidence="1">
    <location>
        <position position="246"/>
    </location>
    <ligand>
        <name>glycerol</name>
        <dbReference type="ChEBI" id="CHEBI:17754"/>
    </ligand>
</feature>
<feature type="binding site" evidence="1">
    <location>
        <position position="267"/>
    </location>
    <ligand>
        <name>ADP</name>
        <dbReference type="ChEBI" id="CHEBI:456216"/>
    </ligand>
</feature>
<feature type="binding site" evidence="1">
    <location>
        <position position="267"/>
    </location>
    <ligand>
        <name>ATP</name>
        <dbReference type="ChEBI" id="CHEBI:30616"/>
    </ligand>
</feature>
<feature type="binding site" evidence="1">
    <location>
        <position position="310"/>
    </location>
    <ligand>
        <name>ADP</name>
        <dbReference type="ChEBI" id="CHEBI:456216"/>
    </ligand>
</feature>
<feature type="binding site" evidence="1">
    <location>
        <position position="310"/>
    </location>
    <ligand>
        <name>ATP</name>
        <dbReference type="ChEBI" id="CHEBI:30616"/>
    </ligand>
</feature>
<feature type="binding site" evidence="1">
    <location>
        <position position="314"/>
    </location>
    <ligand>
        <name>ATP</name>
        <dbReference type="ChEBI" id="CHEBI:30616"/>
    </ligand>
</feature>
<feature type="binding site" evidence="1">
    <location>
        <position position="411"/>
    </location>
    <ligand>
        <name>ADP</name>
        <dbReference type="ChEBI" id="CHEBI:456216"/>
    </ligand>
</feature>
<feature type="binding site" evidence="1">
    <location>
        <position position="411"/>
    </location>
    <ligand>
        <name>ATP</name>
        <dbReference type="ChEBI" id="CHEBI:30616"/>
    </ligand>
</feature>
<feature type="binding site" evidence="1">
    <location>
        <position position="415"/>
    </location>
    <ligand>
        <name>ADP</name>
        <dbReference type="ChEBI" id="CHEBI:456216"/>
    </ligand>
</feature>
<dbReference type="EC" id="2.7.1.30" evidence="1"/>
<dbReference type="EMBL" id="CP000033">
    <property type="protein sequence ID" value="AAV43678.1"/>
    <property type="molecule type" value="Genomic_DNA"/>
</dbReference>
<dbReference type="RefSeq" id="WP_003549614.1">
    <property type="nucleotide sequence ID" value="NC_006814.3"/>
</dbReference>
<dbReference type="RefSeq" id="YP_194709.1">
    <property type="nucleotide sequence ID" value="NC_006814.3"/>
</dbReference>
<dbReference type="SMR" id="Q5FHZ6"/>
<dbReference type="STRING" id="272621.LBA1878"/>
<dbReference type="GeneID" id="93290984"/>
<dbReference type="KEGG" id="lac:LBA1878"/>
<dbReference type="PATRIC" id="fig|272621.13.peg.1786"/>
<dbReference type="eggNOG" id="COG0554">
    <property type="taxonomic scope" value="Bacteria"/>
</dbReference>
<dbReference type="HOGENOM" id="CLU_009281_2_3_9"/>
<dbReference type="OrthoDB" id="9805576at2"/>
<dbReference type="BioCyc" id="LACI272621:G1G49-1832-MONOMER"/>
<dbReference type="UniPathway" id="UPA00618">
    <property type="reaction ID" value="UER00672"/>
</dbReference>
<dbReference type="Proteomes" id="UP000006381">
    <property type="component" value="Chromosome"/>
</dbReference>
<dbReference type="GO" id="GO:0005829">
    <property type="term" value="C:cytosol"/>
    <property type="evidence" value="ECO:0007669"/>
    <property type="project" value="TreeGrafter"/>
</dbReference>
<dbReference type="GO" id="GO:0005524">
    <property type="term" value="F:ATP binding"/>
    <property type="evidence" value="ECO:0007669"/>
    <property type="project" value="UniProtKB-UniRule"/>
</dbReference>
<dbReference type="GO" id="GO:0004370">
    <property type="term" value="F:glycerol kinase activity"/>
    <property type="evidence" value="ECO:0000250"/>
    <property type="project" value="UniProtKB"/>
</dbReference>
<dbReference type="GO" id="GO:0019563">
    <property type="term" value="P:glycerol catabolic process"/>
    <property type="evidence" value="ECO:0007669"/>
    <property type="project" value="UniProtKB-UniRule"/>
</dbReference>
<dbReference type="GO" id="GO:0006071">
    <property type="term" value="P:glycerol metabolic process"/>
    <property type="evidence" value="ECO:0000250"/>
    <property type="project" value="UniProtKB"/>
</dbReference>
<dbReference type="GO" id="GO:0006072">
    <property type="term" value="P:glycerol-3-phosphate metabolic process"/>
    <property type="evidence" value="ECO:0007669"/>
    <property type="project" value="InterPro"/>
</dbReference>
<dbReference type="CDD" id="cd07786">
    <property type="entry name" value="FGGY_EcGK_like"/>
    <property type="match status" value="1"/>
</dbReference>
<dbReference type="FunFam" id="3.30.420.40:FF:000007">
    <property type="entry name" value="Glycerol kinase"/>
    <property type="match status" value="1"/>
</dbReference>
<dbReference type="FunFam" id="3.30.420.40:FF:000008">
    <property type="entry name" value="Glycerol kinase"/>
    <property type="match status" value="1"/>
</dbReference>
<dbReference type="Gene3D" id="3.30.420.40">
    <property type="match status" value="2"/>
</dbReference>
<dbReference type="HAMAP" id="MF_00186">
    <property type="entry name" value="Glycerol_kin"/>
    <property type="match status" value="1"/>
</dbReference>
<dbReference type="InterPro" id="IPR043129">
    <property type="entry name" value="ATPase_NBD"/>
</dbReference>
<dbReference type="InterPro" id="IPR000577">
    <property type="entry name" value="Carb_kinase_FGGY"/>
</dbReference>
<dbReference type="InterPro" id="IPR018483">
    <property type="entry name" value="Carb_kinase_FGGY_CS"/>
</dbReference>
<dbReference type="InterPro" id="IPR018485">
    <property type="entry name" value="FGGY_C"/>
</dbReference>
<dbReference type="InterPro" id="IPR018484">
    <property type="entry name" value="FGGY_N"/>
</dbReference>
<dbReference type="InterPro" id="IPR005999">
    <property type="entry name" value="Glycerol_kin"/>
</dbReference>
<dbReference type="NCBIfam" id="TIGR01311">
    <property type="entry name" value="glycerol_kin"/>
    <property type="match status" value="1"/>
</dbReference>
<dbReference type="NCBIfam" id="NF000756">
    <property type="entry name" value="PRK00047.1"/>
    <property type="match status" value="1"/>
</dbReference>
<dbReference type="PANTHER" id="PTHR10196:SF69">
    <property type="entry name" value="GLYCEROL KINASE"/>
    <property type="match status" value="1"/>
</dbReference>
<dbReference type="PANTHER" id="PTHR10196">
    <property type="entry name" value="SUGAR KINASE"/>
    <property type="match status" value="1"/>
</dbReference>
<dbReference type="Pfam" id="PF02782">
    <property type="entry name" value="FGGY_C"/>
    <property type="match status" value="1"/>
</dbReference>
<dbReference type="Pfam" id="PF00370">
    <property type="entry name" value="FGGY_N"/>
    <property type="match status" value="1"/>
</dbReference>
<dbReference type="PIRSF" id="PIRSF000538">
    <property type="entry name" value="GlpK"/>
    <property type="match status" value="1"/>
</dbReference>
<dbReference type="SUPFAM" id="SSF53067">
    <property type="entry name" value="Actin-like ATPase domain"/>
    <property type="match status" value="2"/>
</dbReference>
<dbReference type="PROSITE" id="PS00933">
    <property type="entry name" value="FGGY_KINASES_1"/>
    <property type="match status" value="1"/>
</dbReference>
<dbReference type="PROSITE" id="PS00445">
    <property type="entry name" value="FGGY_KINASES_2"/>
    <property type="match status" value="1"/>
</dbReference>
<evidence type="ECO:0000255" key="1">
    <source>
        <dbReference type="HAMAP-Rule" id="MF_00186"/>
    </source>
</evidence>